<name>RS4_BRUMB</name>
<organism>
    <name type="scientific">Brucella melitensis biotype 2 (strain ATCC 23457)</name>
    <dbReference type="NCBI Taxonomy" id="546272"/>
    <lineage>
        <taxon>Bacteria</taxon>
        <taxon>Pseudomonadati</taxon>
        <taxon>Pseudomonadota</taxon>
        <taxon>Alphaproteobacteria</taxon>
        <taxon>Hyphomicrobiales</taxon>
        <taxon>Brucellaceae</taxon>
        <taxon>Brucella/Ochrobactrum group</taxon>
        <taxon>Brucella</taxon>
    </lineage>
</organism>
<dbReference type="EMBL" id="CP001488">
    <property type="protein sequence ID" value="ACO00622.1"/>
    <property type="molecule type" value="Genomic_DNA"/>
</dbReference>
<dbReference type="RefSeq" id="WP_002967582.1">
    <property type="nucleotide sequence ID" value="NC_012441.1"/>
</dbReference>
<dbReference type="SMR" id="C0RIG4"/>
<dbReference type="GeneID" id="97533867"/>
<dbReference type="KEGG" id="bmi:BMEA_A0869"/>
<dbReference type="HOGENOM" id="CLU_092403_0_0_5"/>
<dbReference type="Proteomes" id="UP000001748">
    <property type="component" value="Chromosome I"/>
</dbReference>
<dbReference type="GO" id="GO:0015935">
    <property type="term" value="C:small ribosomal subunit"/>
    <property type="evidence" value="ECO:0007669"/>
    <property type="project" value="InterPro"/>
</dbReference>
<dbReference type="GO" id="GO:0019843">
    <property type="term" value="F:rRNA binding"/>
    <property type="evidence" value="ECO:0007669"/>
    <property type="project" value="UniProtKB-UniRule"/>
</dbReference>
<dbReference type="GO" id="GO:0003735">
    <property type="term" value="F:structural constituent of ribosome"/>
    <property type="evidence" value="ECO:0007669"/>
    <property type="project" value="InterPro"/>
</dbReference>
<dbReference type="GO" id="GO:0042274">
    <property type="term" value="P:ribosomal small subunit biogenesis"/>
    <property type="evidence" value="ECO:0007669"/>
    <property type="project" value="TreeGrafter"/>
</dbReference>
<dbReference type="GO" id="GO:0006412">
    <property type="term" value="P:translation"/>
    <property type="evidence" value="ECO:0007669"/>
    <property type="project" value="UniProtKB-UniRule"/>
</dbReference>
<dbReference type="CDD" id="cd00165">
    <property type="entry name" value="S4"/>
    <property type="match status" value="1"/>
</dbReference>
<dbReference type="FunFam" id="3.10.290.10:FF:000001">
    <property type="entry name" value="30S ribosomal protein S4"/>
    <property type="match status" value="1"/>
</dbReference>
<dbReference type="Gene3D" id="1.10.1050.10">
    <property type="entry name" value="Ribosomal Protein S4 Delta 41, Chain A, domain 1"/>
    <property type="match status" value="1"/>
</dbReference>
<dbReference type="Gene3D" id="3.10.290.10">
    <property type="entry name" value="RNA-binding S4 domain"/>
    <property type="match status" value="1"/>
</dbReference>
<dbReference type="HAMAP" id="MF_01306_B">
    <property type="entry name" value="Ribosomal_uS4_B"/>
    <property type="match status" value="1"/>
</dbReference>
<dbReference type="InterPro" id="IPR022801">
    <property type="entry name" value="Ribosomal_uS4"/>
</dbReference>
<dbReference type="InterPro" id="IPR005709">
    <property type="entry name" value="Ribosomal_uS4_bac-type"/>
</dbReference>
<dbReference type="InterPro" id="IPR018079">
    <property type="entry name" value="Ribosomal_uS4_CS"/>
</dbReference>
<dbReference type="InterPro" id="IPR001912">
    <property type="entry name" value="Ribosomal_uS4_N"/>
</dbReference>
<dbReference type="InterPro" id="IPR002942">
    <property type="entry name" value="S4_RNA-bd"/>
</dbReference>
<dbReference type="InterPro" id="IPR036986">
    <property type="entry name" value="S4_RNA-bd_sf"/>
</dbReference>
<dbReference type="NCBIfam" id="NF003717">
    <property type="entry name" value="PRK05327.1"/>
    <property type="match status" value="1"/>
</dbReference>
<dbReference type="NCBIfam" id="TIGR01017">
    <property type="entry name" value="rpsD_bact"/>
    <property type="match status" value="1"/>
</dbReference>
<dbReference type="PANTHER" id="PTHR11831">
    <property type="entry name" value="30S 40S RIBOSOMAL PROTEIN"/>
    <property type="match status" value="1"/>
</dbReference>
<dbReference type="PANTHER" id="PTHR11831:SF4">
    <property type="entry name" value="SMALL RIBOSOMAL SUBUNIT PROTEIN US4M"/>
    <property type="match status" value="1"/>
</dbReference>
<dbReference type="Pfam" id="PF00163">
    <property type="entry name" value="Ribosomal_S4"/>
    <property type="match status" value="1"/>
</dbReference>
<dbReference type="Pfam" id="PF01479">
    <property type="entry name" value="S4"/>
    <property type="match status" value="1"/>
</dbReference>
<dbReference type="SMART" id="SM01390">
    <property type="entry name" value="Ribosomal_S4"/>
    <property type="match status" value="1"/>
</dbReference>
<dbReference type="SMART" id="SM00363">
    <property type="entry name" value="S4"/>
    <property type="match status" value="1"/>
</dbReference>
<dbReference type="SUPFAM" id="SSF55174">
    <property type="entry name" value="Alpha-L RNA-binding motif"/>
    <property type="match status" value="1"/>
</dbReference>
<dbReference type="PROSITE" id="PS00632">
    <property type="entry name" value="RIBOSOMAL_S4"/>
    <property type="match status" value="1"/>
</dbReference>
<dbReference type="PROSITE" id="PS50889">
    <property type="entry name" value="S4"/>
    <property type="match status" value="1"/>
</dbReference>
<proteinExistence type="inferred from homology"/>
<sequence length="205" mass="23592">MSKRESAKYKIDRRLGENIWGRPKSPVNRREYGPGQHGQRRKGKLSDFGVQLRAKQKLKGFYGDISEKQFRKTYEEAARRKGDTGENLIGLLESRLDAVVYRAKFVPTIFAARQFINHGHVNVNGRRVNIQSYRLKVGDVVEVREKSKQLAIVLEAVQLAERDVPDYIDVDHNKMVATYNRVPGLSDVPYAVQMEPNLVVEFYSR</sequence>
<reference key="1">
    <citation type="submission" date="2009-03" db="EMBL/GenBank/DDBJ databases">
        <title>Brucella melitensis ATCC 23457 whole genome shotgun sequencing project.</title>
        <authorList>
            <person name="Setubal J.C."/>
            <person name="Boyle S."/>
            <person name="Crasta O.R."/>
            <person name="Gillespie J.J."/>
            <person name="Kenyon R.W."/>
            <person name="Lu J."/>
            <person name="Mane S."/>
            <person name="Nagrani S."/>
            <person name="Shallom J.M."/>
            <person name="Shallom S."/>
            <person name="Shukla M."/>
            <person name="Snyder E.E."/>
            <person name="Sobral B.W."/>
            <person name="Wattam A.R."/>
            <person name="Will R."/>
            <person name="Williams K."/>
            <person name="Yoo H."/>
            <person name="Munk C."/>
            <person name="Tapia R."/>
            <person name="Han C."/>
            <person name="Detter J.C."/>
            <person name="Bruce D."/>
            <person name="Brettin T.S."/>
        </authorList>
    </citation>
    <scope>NUCLEOTIDE SEQUENCE [LARGE SCALE GENOMIC DNA]</scope>
    <source>
        <strain>ATCC 23457</strain>
    </source>
</reference>
<keyword id="KW-0687">Ribonucleoprotein</keyword>
<keyword id="KW-0689">Ribosomal protein</keyword>
<keyword id="KW-0694">RNA-binding</keyword>
<keyword id="KW-0699">rRNA-binding</keyword>
<protein>
    <recommendedName>
        <fullName evidence="1">Small ribosomal subunit protein uS4</fullName>
    </recommendedName>
    <alternativeName>
        <fullName evidence="3">30S ribosomal protein S4</fullName>
    </alternativeName>
</protein>
<feature type="chain" id="PRO_1000165387" description="Small ribosomal subunit protein uS4">
    <location>
        <begin position="1"/>
        <end position="205"/>
    </location>
</feature>
<feature type="domain" description="S4 RNA-binding" evidence="1">
    <location>
        <begin position="94"/>
        <end position="157"/>
    </location>
</feature>
<feature type="region of interest" description="Disordered" evidence="2">
    <location>
        <begin position="19"/>
        <end position="45"/>
    </location>
</feature>
<comment type="function">
    <text evidence="1">One of the primary rRNA binding proteins, it binds directly to 16S rRNA where it nucleates assembly of the body of the 30S subunit.</text>
</comment>
<comment type="function">
    <text evidence="1">With S5 and S12 plays an important role in translational accuracy.</text>
</comment>
<comment type="subunit">
    <text evidence="1">Part of the 30S ribosomal subunit. Contacts protein S5. The interaction surface between S4 and S5 is involved in control of translational fidelity.</text>
</comment>
<comment type="similarity">
    <text evidence="1">Belongs to the universal ribosomal protein uS4 family.</text>
</comment>
<accession>C0RIG4</accession>
<evidence type="ECO:0000255" key="1">
    <source>
        <dbReference type="HAMAP-Rule" id="MF_01306"/>
    </source>
</evidence>
<evidence type="ECO:0000256" key="2">
    <source>
        <dbReference type="SAM" id="MobiDB-lite"/>
    </source>
</evidence>
<evidence type="ECO:0000305" key="3"/>
<gene>
    <name evidence="1" type="primary">rpsD</name>
    <name type="ordered locus">BMEA_A0869</name>
</gene>